<protein>
    <recommendedName>
        <fullName evidence="2">Ribonuclease R</fullName>
        <shortName evidence="2">RNase R</shortName>
        <ecNumber evidence="2">3.1.13.1</ecNumber>
    </recommendedName>
    <alternativeName>
        <fullName>VacB protein homolog</fullName>
    </alternativeName>
</protein>
<reference key="1">
    <citation type="journal article" date="1997" name="Nature">
        <title>The complete genome sequence of the gastric pathogen Helicobacter pylori.</title>
        <authorList>
            <person name="Tomb J.-F."/>
            <person name="White O."/>
            <person name="Kerlavage A.R."/>
            <person name="Clayton R.A."/>
            <person name="Sutton G.G."/>
            <person name="Fleischmann R.D."/>
            <person name="Ketchum K.A."/>
            <person name="Klenk H.-P."/>
            <person name="Gill S.R."/>
            <person name="Dougherty B.A."/>
            <person name="Nelson K.E."/>
            <person name="Quackenbush J."/>
            <person name="Zhou L."/>
            <person name="Kirkness E.F."/>
            <person name="Peterson S.N."/>
            <person name="Loftus B.J."/>
            <person name="Richardson D.L."/>
            <person name="Dodson R.J."/>
            <person name="Khalak H.G."/>
            <person name="Glodek A."/>
            <person name="McKenney K."/>
            <person name="FitzGerald L.M."/>
            <person name="Lee N."/>
            <person name="Adams M.D."/>
            <person name="Hickey E.K."/>
            <person name="Berg D.E."/>
            <person name="Gocayne J.D."/>
            <person name="Utterback T.R."/>
            <person name="Peterson J.D."/>
            <person name="Kelley J.M."/>
            <person name="Cotton M.D."/>
            <person name="Weidman J.F."/>
            <person name="Fujii C."/>
            <person name="Bowman C."/>
            <person name="Watthey L."/>
            <person name="Wallin E."/>
            <person name="Hayes W.S."/>
            <person name="Borodovsky M."/>
            <person name="Karp P.D."/>
            <person name="Smith H.O."/>
            <person name="Fraser C.M."/>
            <person name="Venter J.C."/>
        </authorList>
    </citation>
    <scope>NUCLEOTIDE SEQUENCE [LARGE SCALE GENOMIC DNA]</scope>
    <source>
        <strain>ATCC 700392 / 26695</strain>
    </source>
</reference>
<reference key="2">
    <citation type="journal article" date="2008" name="PLoS ONE">
        <title>Trans-translation in Helicobacter pylori: essentiality of ribosome rescue and requirement of protein tagging for stress resistance and competence.</title>
        <authorList>
            <person name="Thibonnier M."/>
            <person name="Thiberge J.M."/>
            <person name="De Reuse H."/>
        </authorList>
    </citation>
    <scope>DISRUPTION PHENOTYPE</scope>
    <source>
        <strain>ATCC 700392 / 26695</strain>
        <strain>N6</strain>
        <strain>X47-2AL</strain>
    </source>
</reference>
<evidence type="ECO:0000255" key="1"/>
<evidence type="ECO:0000255" key="2">
    <source>
        <dbReference type="HAMAP-Rule" id="MF_01895"/>
    </source>
</evidence>
<evidence type="ECO:0000269" key="3">
    <source>
    </source>
</evidence>
<name>RNR_HELPY</name>
<comment type="function">
    <text evidence="2">3'-5' exoribonuclease that releases 5'-nucleoside monophosphates and is involved in maturation of structured RNAs.</text>
</comment>
<comment type="catalytic activity">
    <reaction evidence="2">
        <text>Exonucleolytic cleavage in the 3'- to 5'-direction to yield nucleoside 5'-phosphates.</text>
        <dbReference type="EC" id="3.1.13.1"/>
    </reaction>
</comment>
<comment type="subcellular location">
    <subcellularLocation>
        <location evidence="2">Cytoplasm</location>
    </subcellularLocation>
</comment>
<comment type="disruption phenotype">
    <text evidence="3">No visible phenotype.</text>
</comment>
<comment type="similarity">
    <text evidence="2">Belongs to the RNR ribonuclease family. RNase R subfamily.</text>
</comment>
<dbReference type="EC" id="3.1.13.1" evidence="2"/>
<dbReference type="EMBL" id="AE000511">
    <property type="protein sequence ID" value="AAD08293.1"/>
    <property type="molecule type" value="Genomic_DNA"/>
</dbReference>
<dbReference type="PIR" id="H64675">
    <property type="entry name" value="H64675"/>
</dbReference>
<dbReference type="RefSeq" id="NP_208040.1">
    <property type="nucleotide sequence ID" value="NC_000915.1"/>
</dbReference>
<dbReference type="RefSeq" id="WP_001161318.1">
    <property type="nucleotide sequence ID" value="NC_018939.1"/>
</dbReference>
<dbReference type="SMR" id="P56123"/>
<dbReference type="DIP" id="DIP-3252N"/>
<dbReference type="FunCoup" id="P56123">
    <property type="interactions" value="45"/>
</dbReference>
<dbReference type="IntAct" id="P56123">
    <property type="interactions" value="11"/>
</dbReference>
<dbReference type="MINT" id="P56123"/>
<dbReference type="STRING" id="85962.HP_1248"/>
<dbReference type="PaxDb" id="85962-C694_06450"/>
<dbReference type="EnsemblBacteria" id="AAD08293">
    <property type="protein sequence ID" value="AAD08293"/>
    <property type="gene ID" value="HP_1248"/>
</dbReference>
<dbReference type="KEGG" id="heo:C694_06450"/>
<dbReference type="KEGG" id="hpy:HP_1248"/>
<dbReference type="PATRIC" id="fig|85962.47.peg.1340"/>
<dbReference type="eggNOG" id="COG0557">
    <property type="taxonomic scope" value="Bacteria"/>
</dbReference>
<dbReference type="InParanoid" id="P56123"/>
<dbReference type="OrthoDB" id="9764149at2"/>
<dbReference type="PhylomeDB" id="P56123"/>
<dbReference type="Proteomes" id="UP000000429">
    <property type="component" value="Chromosome"/>
</dbReference>
<dbReference type="GO" id="GO:0005829">
    <property type="term" value="C:cytosol"/>
    <property type="evidence" value="ECO:0000318"/>
    <property type="project" value="GO_Central"/>
</dbReference>
<dbReference type="GO" id="GO:0008859">
    <property type="term" value="F:exoribonuclease II activity"/>
    <property type="evidence" value="ECO:0007669"/>
    <property type="project" value="UniProtKB-UniRule"/>
</dbReference>
<dbReference type="GO" id="GO:0003723">
    <property type="term" value="F:RNA binding"/>
    <property type="evidence" value="ECO:0007669"/>
    <property type="project" value="UniProtKB-UniRule"/>
</dbReference>
<dbReference type="GO" id="GO:0006402">
    <property type="term" value="P:mRNA catabolic process"/>
    <property type="evidence" value="ECO:0000318"/>
    <property type="project" value="GO_Central"/>
</dbReference>
<dbReference type="HAMAP" id="MF_01895">
    <property type="entry name" value="RNase_R"/>
    <property type="match status" value="1"/>
</dbReference>
<dbReference type="InterPro" id="IPR012340">
    <property type="entry name" value="NA-bd_OB-fold"/>
</dbReference>
<dbReference type="InterPro" id="IPR001900">
    <property type="entry name" value="RNase_II/R"/>
</dbReference>
<dbReference type="InterPro" id="IPR022966">
    <property type="entry name" value="RNase_II/R_CS"/>
</dbReference>
<dbReference type="InterPro" id="IPR011805">
    <property type="entry name" value="RNase_R"/>
</dbReference>
<dbReference type="InterPro" id="IPR054561">
    <property type="entry name" value="RNR_OB1_N"/>
</dbReference>
<dbReference type="InterPro" id="IPR050180">
    <property type="entry name" value="RNR_Ribonuclease"/>
</dbReference>
<dbReference type="PANTHER" id="PTHR23355:SF9">
    <property type="entry name" value="DIS3-LIKE EXONUCLEASE 2"/>
    <property type="match status" value="1"/>
</dbReference>
<dbReference type="PANTHER" id="PTHR23355">
    <property type="entry name" value="RIBONUCLEASE"/>
    <property type="match status" value="1"/>
</dbReference>
<dbReference type="Pfam" id="PF22896">
    <property type="entry name" value="OB_RNR_1st"/>
    <property type="match status" value="1"/>
</dbReference>
<dbReference type="Pfam" id="PF24190">
    <property type="entry name" value="OB_RNR_2nd"/>
    <property type="match status" value="1"/>
</dbReference>
<dbReference type="Pfam" id="PF00773">
    <property type="entry name" value="RNB"/>
    <property type="match status" value="1"/>
</dbReference>
<dbReference type="SMART" id="SM00955">
    <property type="entry name" value="RNB"/>
    <property type="match status" value="1"/>
</dbReference>
<dbReference type="SUPFAM" id="SSF50249">
    <property type="entry name" value="Nucleic acid-binding proteins"/>
    <property type="match status" value="1"/>
</dbReference>
<dbReference type="PROSITE" id="PS01175">
    <property type="entry name" value="RIBONUCLEASE_II"/>
    <property type="match status" value="1"/>
</dbReference>
<proteinExistence type="inferred from homology"/>
<organism>
    <name type="scientific">Helicobacter pylori (strain ATCC 700392 / 26695)</name>
    <name type="common">Campylobacter pylori</name>
    <dbReference type="NCBI Taxonomy" id="85962"/>
    <lineage>
        <taxon>Bacteria</taxon>
        <taxon>Pseudomonadati</taxon>
        <taxon>Campylobacterota</taxon>
        <taxon>Epsilonproteobacteria</taxon>
        <taxon>Campylobacterales</taxon>
        <taxon>Helicobacteraceae</taxon>
        <taxon>Helicobacter</taxon>
    </lineage>
</organism>
<feature type="chain" id="PRO_0000166404" description="Ribonuclease R">
    <location>
        <begin position="1"/>
        <end position="644"/>
    </location>
</feature>
<feature type="domain" description="RNB" evidence="1">
    <location>
        <begin position="211"/>
        <end position="529"/>
    </location>
</feature>
<feature type="domain" description="S1 motif" evidence="2">
    <location>
        <begin position="573"/>
        <end position="644"/>
    </location>
</feature>
<accession>P56123</accession>
<keyword id="KW-0963">Cytoplasm</keyword>
<keyword id="KW-0269">Exonuclease</keyword>
<keyword id="KW-0378">Hydrolase</keyword>
<keyword id="KW-0540">Nuclease</keyword>
<keyword id="KW-1185">Reference proteome</keyword>
<keyword id="KW-0694">RNA-binding</keyword>
<sequence length="644" mass="74163">MQGFLRSLFFGVKKIPKPFAPLVEKGVLKEALELKKDRYFLKEGFDIGKVEKVKDKAFFISLAKNYPKDPLIKNLPPSFKTDALILCQIECSKKRPIAFFKAALLNADHTMIAYLAKKNNQIVAIPFKEPFKKPVSLKHSQKSLLELPRHCVVKIDTKKREISEILGALEDPLIDENLSLSLFDRVKDFSKDCLNLAQHYAQLKASDFKDRINYSHIPFITIDPKDAKDFDDAIFYDQEKRVLFVAVADVSEFVPKHSSLDKEARVRGFSVYFPNSVYPMLPLSLSQGACSLKAFEKRLALVYEIPLDNLKNARLSQGVIEVRANCTYEEINHFLSANQSSLDKDLQQSLLGFLEMALKLKKERLKKGFNFNSFENKLYLNKEGRIEKIETEKESDAHTLIEEAMLLANQSSARLLDEHFHNKGIYRTHKEPSLEQQKRLYDKLFDYEIVRPKNMGFFPFLEHALKIAKEKSIEREVSRLIIKSQNLALYSPLQESHFGLGFASYTHFTSPIRRYSDLALHRLLKELLFYQAKGCSYLLEETPELCAELNALQKKAALIERDFIKRKFARLALELLEKEFLGVVLEVKDWVVVGLKEFIGLKVLVKTNKVFKPLEKVRVTITHADLILGQVRGEITERIKEHVS</sequence>
<gene>
    <name evidence="2" type="primary">rnr</name>
    <name type="synonym">vacB</name>
    <name type="ordered locus">HP_1248</name>
</gene>